<comment type="function">
    <text evidence="1">Component of the COP9 signalosome (CSN) complex that acts as an regulator of the ubiquitin (Ubl) conjugation pathway by mediating the deneddylation of the cullin subunit of SCF-type E3 ubiquitin-protein ligase complexes.</text>
</comment>
<comment type="subunit">
    <text evidence="3">Component of the COP9 signalosome (CSN) complex composed of at least csn1, csn2, csn4 and csn5 subunits.</text>
</comment>
<comment type="subcellular location">
    <subcellularLocation>
        <location evidence="3">Cytoplasm</location>
    </subcellularLocation>
    <subcellularLocation>
        <location evidence="3">Nucleus</location>
    </subcellularLocation>
</comment>
<comment type="similarity">
    <text evidence="4">Belongs to the CSN4 family.</text>
</comment>
<reference key="1">
    <citation type="journal article" date="2002" name="Nature">
        <title>The genome sequence of Schizosaccharomyces pombe.</title>
        <authorList>
            <person name="Wood V."/>
            <person name="Gwilliam R."/>
            <person name="Rajandream M.A."/>
            <person name="Lyne M.H."/>
            <person name="Lyne R."/>
            <person name="Stewart A."/>
            <person name="Sgouros J.G."/>
            <person name="Peat N."/>
            <person name="Hayles J."/>
            <person name="Baker S.G."/>
            <person name="Basham D."/>
            <person name="Bowman S."/>
            <person name="Brooks K."/>
            <person name="Brown D."/>
            <person name="Brown S."/>
            <person name="Chillingworth T."/>
            <person name="Churcher C.M."/>
            <person name="Collins M."/>
            <person name="Connor R."/>
            <person name="Cronin A."/>
            <person name="Davis P."/>
            <person name="Feltwell T."/>
            <person name="Fraser A."/>
            <person name="Gentles S."/>
            <person name="Goble A."/>
            <person name="Hamlin N."/>
            <person name="Harris D.E."/>
            <person name="Hidalgo J."/>
            <person name="Hodgson G."/>
            <person name="Holroyd S."/>
            <person name="Hornsby T."/>
            <person name="Howarth S."/>
            <person name="Huckle E.J."/>
            <person name="Hunt S."/>
            <person name="Jagels K."/>
            <person name="James K.D."/>
            <person name="Jones L."/>
            <person name="Jones M."/>
            <person name="Leather S."/>
            <person name="McDonald S."/>
            <person name="McLean J."/>
            <person name="Mooney P."/>
            <person name="Moule S."/>
            <person name="Mungall K.L."/>
            <person name="Murphy L.D."/>
            <person name="Niblett D."/>
            <person name="Odell C."/>
            <person name="Oliver K."/>
            <person name="O'Neil S."/>
            <person name="Pearson D."/>
            <person name="Quail M.A."/>
            <person name="Rabbinowitsch E."/>
            <person name="Rutherford K.M."/>
            <person name="Rutter S."/>
            <person name="Saunders D."/>
            <person name="Seeger K."/>
            <person name="Sharp S."/>
            <person name="Skelton J."/>
            <person name="Simmonds M.N."/>
            <person name="Squares R."/>
            <person name="Squares S."/>
            <person name="Stevens K."/>
            <person name="Taylor K."/>
            <person name="Taylor R.G."/>
            <person name="Tivey A."/>
            <person name="Walsh S.V."/>
            <person name="Warren T."/>
            <person name="Whitehead S."/>
            <person name="Woodward J.R."/>
            <person name="Volckaert G."/>
            <person name="Aert R."/>
            <person name="Robben J."/>
            <person name="Grymonprez B."/>
            <person name="Weltjens I."/>
            <person name="Vanstreels E."/>
            <person name="Rieger M."/>
            <person name="Schaefer M."/>
            <person name="Mueller-Auer S."/>
            <person name="Gabel C."/>
            <person name="Fuchs M."/>
            <person name="Duesterhoeft A."/>
            <person name="Fritzc C."/>
            <person name="Holzer E."/>
            <person name="Moestl D."/>
            <person name="Hilbert H."/>
            <person name="Borzym K."/>
            <person name="Langer I."/>
            <person name="Beck A."/>
            <person name="Lehrach H."/>
            <person name="Reinhardt R."/>
            <person name="Pohl T.M."/>
            <person name="Eger P."/>
            <person name="Zimmermann W."/>
            <person name="Wedler H."/>
            <person name="Wambutt R."/>
            <person name="Purnelle B."/>
            <person name="Goffeau A."/>
            <person name="Cadieu E."/>
            <person name="Dreano S."/>
            <person name="Gloux S."/>
            <person name="Lelaure V."/>
            <person name="Mottier S."/>
            <person name="Galibert F."/>
            <person name="Aves S.J."/>
            <person name="Xiang Z."/>
            <person name="Hunt C."/>
            <person name="Moore K."/>
            <person name="Hurst S.M."/>
            <person name="Lucas M."/>
            <person name="Rochet M."/>
            <person name="Gaillardin C."/>
            <person name="Tallada V.A."/>
            <person name="Garzon A."/>
            <person name="Thode G."/>
            <person name="Daga R.R."/>
            <person name="Cruzado L."/>
            <person name="Jimenez J."/>
            <person name="Sanchez M."/>
            <person name="del Rey F."/>
            <person name="Benito J."/>
            <person name="Dominguez A."/>
            <person name="Revuelta J.L."/>
            <person name="Moreno S."/>
            <person name="Armstrong J."/>
            <person name="Forsburg S.L."/>
            <person name="Cerutti L."/>
            <person name="Lowe T."/>
            <person name="McCombie W.R."/>
            <person name="Paulsen I."/>
            <person name="Potashkin J."/>
            <person name="Shpakovski G.V."/>
            <person name="Ussery D."/>
            <person name="Barrell B.G."/>
            <person name="Nurse P."/>
        </authorList>
    </citation>
    <scope>NUCLEOTIDE SEQUENCE [LARGE SCALE GENOMIC DNA]</scope>
    <source>
        <strain>972 / ATCC 24843</strain>
    </source>
</reference>
<reference key="2">
    <citation type="journal article" date="2002" name="Mol. Biol. Cell">
        <title>Deletion mutants in COP9/signalosome subunits in fission yeast Schizosaccharomyces pombe display distinct phenotypes.</title>
        <authorList>
            <person name="Mundt K.E."/>
            <person name="Liu C."/>
            <person name="Carr A.M."/>
        </authorList>
    </citation>
    <scope>SUBUNIT</scope>
    <scope>SUBCELLULAR LOCATION</scope>
</reference>
<gene>
    <name type="primary">csn4</name>
    <name type="ORF">SPAC22A12.03c</name>
</gene>
<name>CSN4_SCHPO</name>
<accession>O13895</accession>
<evidence type="ECO:0000250" key="1"/>
<evidence type="ECO:0000255" key="2">
    <source>
        <dbReference type="PROSITE-ProRule" id="PRU01185"/>
    </source>
</evidence>
<evidence type="ECO:0000269" key="3">
    <source>
    </source>
</evidence>
<evidence type="ECO:0000305" key="4"/>
<organism>
    <name type="scientific">Schizosaccharomyces pombe (strain 972 / ATCC 24843)</name>
    <name type="common">Fission yeast</name>
    <dbReference type="NCBI Taxonomy" id="284812"/>
    <lineage>
        <taxon>Eukaryota</taxon>
        <taxon>Fungi</taxon>
        <taxon>Dikarya</taxon>
        <taxon>Ascomycota</taxon>
        <taxon>Taphrinomycotina</taxon>
        <taxon>Schizosaccharomycetes</taxon>
        <taxon>Schizosaccharomycetales</taxon>
        <taxon>Schizosaccharomycetaceae</taxon>
        <taxon>Schizosaccharomyces</taxon>
    </lineage>
</organism>
<protein>
    <recommendedName>
        <fullName>COP9 signalosome complex subunit 4</fullName>
        <shortName>CSN complex subunit 4</shortName>
        <shortName>SGN4</shortName>
    </recommendedName>
</protein>
<feature type="chain" id="PRO_0000120995" description="COP9 signalosome complex subunit 4">
    <location>
        <begin position="1"/>
        <end position="377"/>
    </location>
</feature>
<feature type="domain" description="PCI" evidence="2">
    <location>
        <begin position="190"/>
        <end position="356"/>
    </location>
</feature>
<keyword id="KW-0963">Cytoplasm</keyword>
<keyword id="KW-0539">Nucleus</keyword>
<keyword id="KW-1185">Reference proteome</keyword>
<keyword id="KW-0736">Signalosome</keyword>
<sequence>MEEVVHYFLEGNMPVAQFREALALHYTNEKELFEQAKRCLNICCGSNNFAKRNDVLFSLLDVAVSISSLELRKELISELYVPVQSLEEAPSEYLVSCCLQLATIYEAEQNFELLCSSLEAVEKHGHFENDLEQLLLLRIRLGDAYLKLGKAEKAILTVRTSIPLAFKVSNDQLLMELQLCNARALDETGQFLEAAKCYYRVLQYKVPGNELIYRENLCSVAQCLLLAIPSPIVLQFLQEISLQPSVREIPFYSLVEKYLKRKFIGKEDGAFLLPFLLPHQVIHMNRLIEDGRHFLETNILFLSEFFEVSSTSILAKHFKLSEEQVDTVVADMVIQERLNASIDQCEGYITFLPEYGKANNLPNYVNKIATVLQHYGS</sequence>
<proteinExistence type="evidence at protein level"/>
<dbReference type="EMBL" id="CU329670">
    <property type="protein sequence ID" value="CAB16573.1"/>
    <property type="molecule type" value="Genomic_DNA"/>
</dbReference>
<dbReference type="PIR" id="T38143">
    <property type="entry name" value="T38143"/>
</dbReference>
<dbReference type="RefSeq" id="NP_593233.1">
    <property type="nucleotide sequence ID" value="NM_001018630.2"/>
</dbReference>
<dbReference type="SMR" id="O13895"/>
<dbReference type="BioGRID" id="278018">
    <property type="interactions" value="13"/>
</dbReference>
<dbReference type="FunCoup" id="O13895">
    <property type="interactions" value="348"/>
</dbReference>
<dbReference type="IntAct" id="O13895">
    <property type="interactions" value="1"/>
</dbReference>
<dbReference type="STRING" id="284812.O13895"/>
<dbReference type="PaxDb" id="4896-SPAC22A12.03c.1"/>
<dbReference type="EnsemblFungi" id="SPAC22A12.03c.1">
    <property type="protein sequence ID" value="SPAC22A12.03c.1:pep"/>
    <property type="gene ID" value="SPAC22A12.03c"/>
</dbReference>
<dbReference type="GeneID" id="2541517"/>
<dbReference type="KEGG" id="spo:2541517"/>
<dbReference type="PomBase" id="SPAC22A12.03c">
    <property type="gene designation" value="csn4"/>
</dbReference>
<dbReference type="VEuPathDB" id="FungiDB:SPAC22A12.03c"/>
<dbReference type="eggNOG" id="KOG1497">
    <property type="taxonomic scope" value="Eukaryota"/>
</dbReference>
<dbReference type="HOGENOM" id="CLU_750396_0_0_1"/>
<dbReference type="InParanoid" id="O13895"/>
<dbReference type="OMA" id="KNIMHTV"/>
<dbReference type="PhylomeDB" id="O13895"/>
<dbReference type="PRO" id="PR:O13895"/>
<dbReference type="Proteomes" id="UP000002485">
    <property type="component" value="Chromosome I"/>
</dbReference>
<dbReference type="GO" id="GO:0008180">
    <property type="term" value="C:COP9 signalosome"/>
    <property type="evidence" value="ECO:0000266"/>
    <property type="project" value="PomBase"/>
</dbReference>
<dbReference type="GO" id="GO:0005737">
    <property type="term" value="C:cytoplasm"/>
    <property type="evidence" value="ECO:0000318"/>
    <property type="project" value="GO_Central"/>
</dbReference>
<dbReference type="GO" id="GO:0005829">
    <property type="term" value="C:cytosol"/>
    <property type="evidence" value="ECO:0007005"/>
    <property type="project" value="PomBase"/>
</dbReference>
<dbReference type="GO" id="GO:0005634">
    <property type="term" value="C:nucleus"/>
    <property type="evidence" value="ECO:0007005"/>
    <property type="project" value="PomBase"/>
</dbReference>
<dbReference type="GO" id="GO:0008541">
    <property type="term" value="C:proteasome regulatory particle, lid subcomplex"/>
    <property type="evidence" value="ECO:0000318"/>
    <property type="project" value="GO_Central"/>
</dbReference>
<dbReference type="GO" id="GO:0000338">
    <property type="term" value="P:protein deneddylation"/>
    <property type="evidence" value="ECO:0000315"/>
    <property type="project" value="PomBase"/>
</dbReference>
<dbReference type="Gene3D" id="1.25.40.10">
    <property type="entry name" value="Tetratricopeptide repeat domain"/>
    <property type="match status" value="1"/>
</dbReference>
<dbReference type="Gene3D" id="1.10.10.10">
    <property type="entry name" value="Winged helix-like DNA-binding domain superfamily/Winged helix DNA-binding domain"/>
    <property type="match status" value="1"/>
</dbReference>
<dbReference type="InterPro" id="IPR000717">
    <property type="entry name" value="PCI_dom"/>
</dbReference>
<dbReference type="InterPro" id="IPR040134">
    <property type="entry name" value="PSMD12/CSN4"/>
</dbReference>
<dbReference type="InterPro" id="IPR011990">
    <property type="entry name" value="TPR-like_helical_dom_sf"/>
</dbReference>
<dbReference type="InterPro" id="IPR036388">
    <property type="entry name" value="WH-like_DNA-bd_sf"/>
</dbReference>
<dbReference type="InterPro" id="IPR036390">
    <property type="entry name" value="WH_DNA-bd_sf"/>
</dbReference>
<dbReference type="PANTHER" id="PTHR10855">
    <property type="entry name" value="26S PROTEASOME NON-ATPASE REGULATORY SUBUNIT 12/COP9 SIGNALOSOME COMPLEX SUBUNIT 4"/>
    <property type="match status" value="1"/>
</dbReference>
<dbReference type="PANTHER" id="PTHR10855:SF11">
    <property type="entry name" value="COP9 SIGNALOSOME COMPLEX SUBUNIT 4"/>
    <property type="match status" value="1"/>
</dbReference>
<dbReference type="Pfam" id="PF01399">
    <property type="entry name" value="PCI"/>
    <property type="match status" value="1"/>
</dbReference>
<dbReference type="SMART" id="SM00088">
    <property type="entry name" value="PINT"/>
    <property type="match status" value="1"/>
</dbReference>
<dbReference type="SUPFAM" id="SSF48452">
    <property type="entry name" value="TPR-like"/>
    <property type="match status" value="1"/>
</dbReference>
<dbReference type="SUPFAM" id="SSF46785">
    <property type="entry name" value="Winged helix' DNA-binding domain"/>
    <property type="match status" value="1"/>
</dbReference>
<dbReference type="PROSITE" id="PS50250">
    <property type="entry name" value="PCI"/>
    <property type="match status" value="1"/>
</dbReference>